<organism>
    <name type="scientific">Heliothis virescens ascovirus 3e</name>
    <name type="common">HvAV-3e</name>
    <dbReference type="NCBI Taxonomy" id="260797"/>
    <lineage>
        <taxon>Viruses</taxon>
        <taxon>Varidnaviria</taxon>
        <taxon>Bamfordvirae</taxon>
        <taxon>Nucleocytoviricota</taxon>
        <taxon>Megaviricetes</taxon>
        <taxon>Pimascovirales</taxon>
        <taxon>Ascoviridae</taxon>
        <taxon>Ascovirus</taxon>
        <taxon>Ascovirus TnAV2a</taxon>
    </lineage>
</organism>
<evidence type="ECO:0000269" key="1">
    <source>
    </source>
</evidence>
<evidence type="ECO:0000305" key="2"/>
<proteinExistence type="inferred from homology"/>
<protein>
    <recommendedName>
        <fullName>Caspase-like protein</fullName>
    </recommendedName>
</protein>
<keyword id="KW-1185">Reference proteome</keyword>
<comment type="function">
    <text evidence="1">May be involved in viral replication.</text>
</comment>
<comment type="similarity">
    <text evidence="2">Belongs to the peptidase C14A family.</text>
</comment>
<sequence>MSSSFKFNYNMGDSRILVVINQRCLALPSMMSADGTCCNGDENRVIDTFSKLGFQDFVYRNMTTADLKDIVTLLTRHNHRTYSCVVVVILTDGAAVGEIKTADGSYKLRDFMTLFDVDKLRDKPKMFVVQTNRGAKIRRNHCKHASCQCLMYSSSERGGLRRIYSVIGWLCKVFGRSSSSPQFASQQLACLNYTLPVRETIVIYSYVDAFVLYGDTDVGSPVIYELCTALDKFGKSCNILTAITMMQHKVAKYVPAALPVVHMNCTRLMHYGDAPNDVTPSKATITTMIDGCSVILEEEGELSDDDGELRTASK</sequence>
<organismHost>
    <name type="scientific">Noctuidae</name>
    <name type="common">owlet moths</name>
    <dbReference type="NCBI Taxonomy" id="7100"/>
</organismHost>
<feature type="chain" id="PRO_0000329068" description="Caspase-like protein">
    <location>
        <begin position="1"/>
        <end position="314"/>
    </location>
</feature>
<dbReference type="EMBL" id="EF133465">
    <property type="protein sequence ID" value="ABO37350.1"/>
    <property type="molecule type" value="Genomic_DNA"/>
</dbReference>
<dbReference type="RefSeq" id="YP_001111016.1">
    <property type="nucleotide sequence ID" value="NC_009233.1"/>
</dbReference>
<dbReference type="SMR" id="A4KXL9"/>
<dbReference type="MEROPS" id="C14.037"/>
<dbReference type="KEGG" id="vg:5076200"/>
<dbReference type="OrthoDB" id="33723at10239"/>
<dbReference type="Proteomes" id="UP000001324">
    <property type="component" value="Genome"/>
</dbReference>
<dbReference type="GO" id="GO:0004197">
    <property type="term" value="F:cysteine-type endopeptidase activity"/>
    <property type="evidence" value="ECO:0007669"/>
    <property type="project" value="InterPro"/>
</dbReference>
<dbReference type="GO" id="GO:0043525">
    <property type="term" value="P:positive regulation of neuron apoptotic process"/>
    <property type="evidence" value="ECO:0007669"/>
    <property type="project" value="TreeGrafter"/>
</dbReference>
<dbReference type="GO" id="GO:0006508">
    <property type="term" value="P:proteolysis"/>
    <property type="evidence" value="ECO:0007669"/>
    <property type="project" value="InterPro"/>
</dbReference>
<dbReference type="Gene3D" id="3.40.50.1460">
    <property type="match status" value="1"/>
</dbReference>
<dbReference type="InterPro" id="IPR029030">
    <property type="entry name" value="Caspase-like_dom_sf"/>
</dbReference>
<dbReference type="InterPro" id="IPR002398">
    <property type="entry name" value="Pept_C14"/>
</dbReference>
<dbReference type="InterPro" id="IPR011600">
    <property type="entry name" value="Pept_C14_caspase"/>
</dbReference>
<dbReference type="InterPro" id="IPR001309">
    <property type="entry name" value="Pept_C14_p20"/>
</dbReference>
<dbReference type="InterPro" id="IPR015917">
    <property type="entry name" value="Pept_C14A"/>
</dbReference>
<dbReference type="PANTHER" id="PTHR10454">
    <property type="entry name" value="CASPASE"/>
    <property type="match status" value="1"/>
</dbReference>
<dbReference type="PANTHER" id="PTHR10454:SF210">
    <property type="entry name" value="CASPASE-2"/>
    <property type="match status" value="1"/>
</dbReference>
<dbReference type="Pfam" id="PF00656">
    <property type="entry name" value="Peptidase_C14"/>
    <property type="match status" value="1"/>
</dbReference>
<dbReference type="SMART" id="SM00115">
    <property type="entry name" value="CASc"/>
    <property type="match status" value="1"/>
</dbReference>
<dbReference type="SUPFAM" id="SSF52129">
    <property type="entry name" value="Caspase-like"/>
    <property type="match status" value="1"/>
</dbReference>
<dbReference type="PROSITE" id="PS50208">
    <property type="entry name" value="CASPASE_P20"/>
    <property type="match status" value="1"/>
</dbReference>
<gene>
    <name type="ORF">ORF165</name>
</gene>
<accession>A4KXL9</accession>
<name>CSPL_HVAVE</name>
<reference key="1">
    <citation type="journal article" date="2007" name="J. Gen. Virol.">
        <title>Sequence and organization of the Heliothis virescens ascovirus genome.</title>
        <authorList>
            <person name="Asgari S."/>
            <person name="Davis J."/>
            <person name="Wood D."/>
            <person name="Wilson P."/>
            <person name="McGrath A."/>
        </authorList>
    </citation>
    <scope>NUCLEOTIDE SEQUENCE [LARGE SCALE GENOMIC DNA]</scope>
</reference>
<reference key="2">
    <citation type="journal article" date="2007" name="Virus Res.">
        <title>A caspase-like gene from Heliothis virescens ascovirus (HvAV-3e) is not involved in apoptosis but is essential for virus replication.</title>
        <authorList>
            <person name="Asgari S."/>
        </authorList>
    </citation>
    <scope>FUNCTION</scope>
</reference>